<gene>
    <name evidence="1" type="primary">dcd</name>
    <name type="ordered locus">Msm_0402</name>
</gene>
<accession>A5UK79</accession>
<comment type="function">
    <text evidence="1">Bifunctional enzyme that catalyzes both the deamination of dCTP to dUTP and the hydrolysis of dUTP to dUMP without releasing the toxic dUTP intermediate.</text>
</comment>
<comment type="catalytic activity">
    <reaction evidence="1">
        <text>dCTP + 2 H2O = dUMP + NH4(+) + diphosphate</text>
        <dbReference type="Rhea" id="RHEA:19205"/>
        <dbReference type="ChEBI" id="CHEBI:15377"/>
        <dbReference type="ChEBI" id="CHEBI:28938"/>
        <dbReference type="ChEBI" id="CHEBI:33019"/>
        <dbReference type="ChEBI" id="CHEBI:61481"/>
        <dbReference type="ChEBI" id="CHEBI:246422"/>
        <dbReference type="EC" id="3.5.4.30"/>
    </reaction>
</comment>
<comment type="pathway">
    <text evidence="1">Pyrimidine metabolism; dUMP biosynthesis; dUMP from dCTP: step 1/1.</text>
</comment>
<comment type="subunit">
    <text evidence="1">Homotrimer.</text>
</comment>
<comment type="similarity">
    <text evidence="1">Belongs to the dCTP deaminase family.</text>
</comment>
<keyword id="KW-0378">Hydrolase</keyword>
<keyword id="KW-0546">Nucleotide metabolism</keyword>
<keyword id="KW-0547">Nucleotide-binding</keyword>
<protein>
    <recommendedName>
        <fullName evidence="1">dCTP deaminase, dUMP-forming</fullName>
        <ecNumber evidence="1">3.5.4.30</ecNumber>
    </recommendedName>
    <alternativeName>
        <fullName evidence="1">Bifunctional dCTP deaminase:dUTPase</fullName>
    </alternativeName>
    <alternativeName>
        <fullName evidence="1">DCD-DUT</fullName>
    </alternativeName>
</protein>
<name>DCDB_METS3</name>
<sequence length="194" mass="21958">MAILSDKTIKEYLEEGKIVIDPLKDEQQIQPSSVDMRLGDEFKVFKVIRKPYIDPKDEEDIAEYMESSTVPEGEAFIIHPNEFALATTQEYVKVPDDLVARVEGRSSMGRLGVTMHVTAGYVDPGFEGRITLEISNIGAMPVALYPGQRVCQLVFETMTTPAELPYGHPKRNSKYMKQLKPESSRVKLDYELKK</sequence>
<feature type="chain" id="PRO_1000009754" description="dCTP deaminase, dUMP-forming">
    <location>
        <begin position="1"/>
        <end position="194"/>
    </location>
</feature>
<feature type="active site" description="Proton donor/acceptor" evidence="1">
    <location>
        <position position="133"/>
    </location>
</feature>
<feature type="binding site" evidence="1">
    <location>
        <begin position="105"/>
        <end position="110"/>
    </location>
    <ligand>
        <name>dCTP</name>
        <dbReference type="ChEBI" id="CHEBI:61481"/>
    </ligand>
</feature>
<feature type="binding site" evidence="1">
    <location>
        <position position="123"/>
    </location>
    <ligand>
        <name>dCTP</name>
        <dbReference type="ChEBI" id="CHEBI:61481"/>
    </ligand>
</feature>
<feature type="binding site" evidence="1">
    <location>
        <begin position="131"/>
        <end position="133"/>
    </location>
    <ligand>
        <name>dCTP</name>
        <dbReference type="ChEBI" id="CHEBI:61481"/>
    </ligand>
</feature>
<feature type="binding site" evidence="1">
    <location>
        <position position="152"/>
    </location>
    <ligand>
        <name>dCTP</name>
        <dbReference type="ChEBI" id="CHEBI:61481"/>
    </ligand>
</feature>
<feature type="binding site" evidence="1">
    <location>
        <position position="166"/>
    </location>
    <ligand>
        <name>dCTP</name>
        <dbReference type="ChEBI" id="CHEBI:61481"/>
    </ligand>
</feature>
<feature type="binding site" evidence="1">
    <location>
        <position position="174"/>
    </location>
    <ligand>
        <name>dCTP</name>
        <dbReference type="ChEBI" id="CHEBI:61481"/>
    </ligand>
</feature>
<feature type="binding site" evidence="1">
    <location>
        <position position="178"/>
    </location>
    <ligand>
        <name>dCTP</name>
        <dbReference type="ChEBI" id="CHEBI:61481"/>
    </ligand>
</feature>
<feature type="site" description="Important for bifunctional activity" evidence="1">
    <location>
        <begin position="120"/>
        <end position="121"/>
    </location>
</feature>
<dbReference type="EC" id="3.5.4.30" evidence="1"/>
<dbReference type="EMBL" id="CP000678">
    <property type="protein sequence ID" value="ABQ86607.1"/>
    <property type="molecule type" value="Genomic_DNA"/>
</dbReference>
<dbReference type="RefSeq" id="WP_011953868.1">
    <property type="nucleotide sequence ID" value="NZ_CP117965.1"/>
</dbReference>
<dbReference type="SMR" id="A5UK79"/>
<dbReference type="STRING" id="420247.Msm_0402"/>
<dbReference type="EnsemblBacteria" id="ABQ86607">
    <property type="protein sequence ID" value="ABQ86607"/>
    <property type="gene ID" value="Msm_0402"/>
</dbReference>
<dbReference type="GeneID" id="78817030"/>
<dbReference type="KEGG" id="msi:Msm_0402"/>
<dbReference type="PATRIC" id="fig|420247.28.peg.405"/>
<dbReference type="eggNOG" id="arCOG04048">
    <property type="taxonomic scope" value="Archaea"/>
</dbReference>
<dbReference type="HOGENOM" id="CLU_087476_2_1_2"/>
<dbReference type="UniPathway" id="UPA00610">
    <property type="reaction ID" value="UER00667"/>
</dbReference>
<dbReference type="Proteomes" id="UP000001992">
    <property type="component" value="Chromosome"/>
</dbReference>
<dbReference type="GO" id="GO:0033973">
    <property type="term" value="F:dCTP deaminase (dUMP-forming) activity"/>
    <property type="evidence" value="ECO:0007669"/>
    <property type="project" value="UniProtKB-UniRule"/>
</dbReference>
<dbReference type="GO" id="GO:0008829">
    <property type="term" value="F:dCTP deaminase activity"/>
    <property type="evidence" value="ECO:0007669"/>
    <property type="project" value="InterPro"/>
</dbReference>
<dbReference type="GO" id="GO:0000166">
    <property type="term" value="F:nucleotide binding"/>
    <property type="evidence" value="ECO:0007669"/>
    <property type="project" value="UniProtKB-KW"/>
</dbReference>
<dbReference type="GO" id="GO:0006226">
    <property type="term" value="P:dUMP biosynthetic process"/>
    <property type="evidence" value="ECO:0007669"/>
    <property type="project" value="UniProtKB-UniRule"/>
</dbReference>
<dbReference type="GO" id="GO:0006229">
    <property type="term" value="P:dUTP biosynthetic process"/>
    <property type="evidence" value="ECO:0007669"/>
    <property type="project" value="InterPro"/>
</dbReference>
<dbReference type="GO" id="GO:0015949">
    <property type="term" value="P:nucleobase-containing small molecule interconversion"/>
    <property type="evidence" value="ECO:0007669"/>
    <property type="project" value="TreeGrafter"/>
</dbReference>
<dbReference type="CDD" id="cd07557">
    <property type="entry name" value="trimeric_dUTPase"/>
    <property type="match status" value="1"/>
</dbReference>
<dbReference type="FunFam" id="2.70.40.10:FF:000005">
    <property type="entry name" value="dCTP deaminase, dUMP-forming"/>
    <property type="match status" value="1"/>
</dbReference>
<dbReference type="Gene3D" id="2.70.40.10">
    <property type="match status" value="1"/>
</dbReference>
<dbReference type="HAMAP" id="MF_00146">
    <property type="entry name" value="dCTP_deaminase"/>
    <property type="match status" value="1"/>
</dbReference>
<dbReference type="InterPro" id="IPR011962">
    <property type="entry name" value="dCTP_deaminase"/>
</dbReference>
<dbReference type="InterPro" id="IPR036157">
    <property type="entry name" value="dUTPase-like_sf"/>
</dbReference>
<dbReference type="InterPro" id="IPR033704">
    <property type="entry name" value="dUTPase_trimeric"/>
</dbReference>
<dbReference type="NCBIfam" id="TIGR02274">
    <property type="entry name" value="dCTP_deam"/>
    <property type="match status" value="1"/>
</dbReference>
<dbReference type="PANTHER" id="PTHR42680">
    <property type="entry name" value="DCTP DEAMINASE"/>
    <property type="match status" value="1"/>
</dbReference>
<dbReference type="PANTHER" id="PTHR42680:SF3">
    <property type="entry name" value="DCTP DEAMINASE"/>
    <property type="match status" value="1"/>
</dbReference>
<dbReference type="Pfam" id="PF22769">
    <property type="entry name" value="DCD"/>
    <property type="match status" value="1"/>
</dbReference>
<dbReference type="SUPFAM" id="SSF51283">
    <property type="entry name" value="dUTPase-like"/>
    <property type="match status" value="1"/>
</dbReference>
<reference key="1">
    <citation type="journal article" date="2007" name="Proc. Natl. Acad. Sci. U.S.A.">
        <title>Genomic and metabolic adaptations of Methanobrevibacter smithii to the human gut.</title>
        <authorList>
            <person name="Samuel B.S."/>
            <person name="Hansen E.E."/>
            <person name="Manchester J.K."/>
            <person name="Coutinho P.M."/>
            <person name="Henrissat B."/>
            <person name="Fulton R."/>
            <person name="Latreille P."/>
            <person name="Kim K."/>
            <person name="Wilson R.K."/>
            <person name="Gordon J.I."/>
        </authorList>
    </citation>
    <scope>NUCLEOTIDE SEQUENCE [LARGE SCALE GENOMIC DNA]</scope>
    <source>
        <strain>ATCC 35061 / DSM 861 / OCM 144 / PS</strain>
    </source>
</reference>
<proteinExistence type="inferred from homology"/>
<evidence type="ECO:0000255" key="1">
    <source>
        <dbReference type="HAMAP-Rule" id="MF_00146"/>
    </source>
</evidence>
<organism>
    <name type="scientific">Methanobrevibacter smithii (strain ATCC 35061 / DSM 861 / OCM 144 / PS)</name>
    <dbReference type="NCBI Taxonomy" id="420247"/>
    <lineage>
        <taxon>Archaea</taxon>
        <taxon>Methanobacteriati</taxon>
        <taxon>Methanobacteriota</taxon>
        <taxon>Methanomada group</taxon>
        <taxon>Methanobacteria</taxon>
        <taxon>Methanobacteriales</taxon>
        <taxon>Methanobacteriaceae</taxon>
        <taxon>Methanobrevibacter</taxon>
    </lineage>
</organism>